<evidence type="ECO:0000255" key="1">
    <source>
        <dbReference type="HAMAP-Rule" id="MF_01412"/>
    </source>
</evidence>
<evidence type="ECO:0000255" key="2">
    <source>
        <dbReference type="PROSITE-ProRule" id="PRU00543"/>
    </source>
</evidence>
<proteinExistence type="inferred from homology"/>
<organism>
    <name type="scientific">Shigella boydii serotype 4 (strain Sb227)</name>
    <dbReference type="NCBI Taxonomy" id="300268"/>
    <lineage>
        <taxon>Bacteria</taxon>
        <taxon>Pseudomonadati</taxon>
        <taxon>Pseudomonadota</taxon>
        <taxon>Gammaproteobacteria</taxon>
        <taxon>Enterobacterales</taxon>
        <taxon>Enterobacteriaceae</taxon>
        <taxon>Shigella</taxon>
    </lineage>
</organism>
<keyword id="KW-0050">Antiport</keyword>
<keyword id="KW-0997">Cell inner membrane</keyword>
<keyword id="KW-1003">Cell membrane</keyword>
<keyword id="KW-0406">Ion transport</keyword>
<keyword id="KW-0472">Membrane</keyword>
<keyword id="KW-0630">Potassium</keyword>
<keyword id="KW-0633">Potassium transport</keyword>
<keyword id="KW-0812">Transmembrane</keyword>
<keyword id="KW-1133">Transmembrane helix</keyword>
<keyword id="KW-0813">Transport</keyword>
<feature type="chain" id="PRO_0000301533" description="Glutathione-regulated potassium-efflux system protein KefB">
    <location>
        <begin position="1"/>
        <end position="603"/>
    </location>
</feature>
<feature type="transmembrane region" description="Helical" evidence="1">
    <location>
        <begin position="4"/>
        <end position="24"/>
    </location>
</feature>
<feature type="transmembrane region" description="Helical" evidence="1">
    <location>
        <begin position="29"/>
        <end position="49"/>
    </location>
</feature>
<feature type="transmembrane region" description="Helical" evidence="1">
    <location>
        <begin position="55"/>
        <end position="75"/>
    </location>
</feature>
<feature type="transmembrane region" description="Helical" evidence="1">
    <location>
        <begin position="87"/>
        <end position="107"/>
    </location>
</feature>
<feature type="transmembrane region" description="Helical" evidence="1">
    <location>
        <begin position="115"/>
        <end position="135"/>
    </location>
</feature>
<feature type="transmembrane region" description="Helical" evidence="1">
    <location>
        <begin position="152"/>
        <end position="172"/>
    </location>
</feature>
<feature type="transmembrane region" description="Helical" evidence="1">
    <location>
        <begin position="177"/>
        <end position="197"/>
    </location>
</feature>
<feature type="transmembrane region" description="Helical" evidence="1">
    <location>
        <begin position="207"/>
        <end position="227"/>
    </location>
</feature>
<feature type="transmembrane region" description="Helical" evidence="1">
    <location>
        <begin position="230"/>
        <end position="250"/>
    </location>
</feature>
<feature type="transmembrane region" description="Helical" evidence="1">
    <location>
        <begin position="268"/>
        <end position="288"/>
    </location>
</feature>
<feature type="transmembrane region" description="Helical" evidence="1">
    <location>
        <begin position="291"/>
        <end position="311"/>
    </location>
</feature>
<feature type="transmembrane region" description="Helical" evidence="1">
    <location>
        <begin position="324"/>
        <end position="344"/>
    </location>
</feature>
<feature type="transmembrane region" description="Helical" evidence="1">
    <location>
        <begin position="355"/>
        <end position="375"/>
    </location>
</feature>
<feature type="domain" description="RCK N-terminal" evidence="2">
    <location>
        <begin position="402"/>
        <end position="521"/>
    </location>
</feature>
<comment type="function">
    <text evidence="1">Pore-forming subunit of a potassium efflux system that confers protection against electrophiles. Catalyzes K(+)/H(+) antiport.</text>
</comment>
<comment type="subunit">
    <text evidence="1">Interacts with the regulatory subunit KefG.</text>
</comment>
<comment type="subcellular location">
    <subcellularLocation>
        <location evidence="1">Cell inner membrane</location>
        <topology evidence="1">Multi-pass membrane protein</topology>
    </subcellularLocation>
</comment>
<comment type="similarity">
    <text evidence="1">Belongs to the monovalent cation:proton antiporter 2 (CPA2) transporter (TC 2.A.37) family. KefB subfamily.</text>
</comment>
<protein>
    <recommendedName>
        <fullName evidence="1">Glutathione-regulated potassium-efflux system protein KefB</fullName>
    </recommendedName>
    <alternativeName>
        <fullName evidence="1">K(+)/H(+) antiporter</fullName>
    </alternativeName>
</protein>
<gene>
    <name evidence="1" type="primary">kefB</name>
    <name type="ordered locus">SBO_3330</name>
</gene>
<sequence length="603" mass="66625">MEGSDFLLAGVLFLFAAVAAVPLASRLGIGAVLGYLLAGIAIGPWGLGFISDVDEILHFSELGVVFLMFIIGLELNPSKLWQLRRSIFGVGAAQVLLSAALLAGLLMLTDFAWQAAVVGGIGLAMSSTAMALQLMREKGMNRSESGQLGFSVLLFQDLAVIPALALVPLLAGSADEHFDWMKIGMKVLAFVGMLIGGRYLLRPVFRFIAASGVREVFTAATLLLVLGSALFMDALGLSMALGTFIAGVLLAESEYRHELETAIDPFKGLLLGLFFISVGMSLNLGVLYTHLLWVVISVVVLVAVKILVLYLLARLYGVRSSERMQFAGVLSQGGEFAFVLFSTASSQRLFQGDQMALLLVTVTVTLSMMTTPLLMKLVDKWLSRQFNGPEEEDEKPWVNDDKPQVIVVGFGRFGQVIGRLLMANKMRITVLERDISAVNLMRKYGYKVYYGDATQVDLLRSAGAEAAESIVITCNEPEDTMKLVEICQQHFPHLHILARARGRVEAHELLQAGVTQFSRETFSSALELGRKTLVTLGMHPHQAQRAQLHFRRLDMRMLRELIPMHADTVQISRAREARRELEEIFQREMQQERRQLDGWDEFE</sequence>
<name>KEFB_SHIBS</name>
<accession>Q31VU0</accession>
<dbReference type="EMBL" id="CP000036">
    <property type="protein sequence ID" value="ABB67818.1"/>
    <property type="molecule type" value="Genomic_DNA"/>
</dbReference>
<dbReference type="RefSeq" id="WP_000399134.1">
    <property type="nucleotide sequence ID" value="NC_007613.1"/>
</dbReference>
<dbReference type="SMR" id="Q31VU0"/>
<dbReference type="KEGG" id="sbo:SBO_3330"/>
<dbReference type="HOGENOM" id="CLU_005126_9_3_6"/>
<dbReference type="Proteomes" id="UP000007067">
    <property type="component" value="Chromosome"/>
</dbReference>
<dbReference type="GO" id="GO:0005886">
    <property type="term" value="C:plasma membrane"/>
    <property type="evidence" value="ECO:0007669"/>
    <property type="project" value="UniProtKB-SubCell"/>
</dbReference>
<dbReference type="GO" id="GO:0015503">
    <property type="term" value="F:glutathione-regulated potassium exporter activity"/>
    <property type="evidence" value="ECO:0007669"/>
    <property type="project" value="UniProtKB-UniRule"/>
</dbReference>
<dbReference type="GO" id="GO:1902600">
    <property type="term" value="P:proton transmembrane transport"/>
    <property type="evidence" value="ECO:0007669"/>
    <property type="project" value="InterPro"/>
</dbReference>
<dbReference type="FunFam" id="1.20.1530.20:FF:000001">
    <property type="entry name" value="Glutathione-regulated potassium-efflux system protein KefB"/>
    <property type="match status" value="1"/>
</dbReference>
<dbReference type="FunFam" id="3.40.50.720:FF:000036">
    <property type="entry name" value="Glutathione-regulated potassium-efflux system protein KefB"/>
    <property type="match status" value="1"/>
</dbReference>
<dbReference type="Gene3D" id="1.20.1530.20">
    <property type="match status" value="1"/>
</dbReference>
<dbReference type="Gene3D" id="3.40.50.720">
    <property type="entry name" value="NAD(P)-binding Rossmann-like Domain"/>
    <property type="match status" value="1"/>
</dbReference>
<dbReference type="HAMAP" id="MF_01412">
    <property type="entry name" value="K_H_efflux_KefB"/>
    <property type="match status" value="1"/>
</dbReference>
<dbReference type="InterPro" id="IPR006153">
    <property type="entry name" value="Cation/H_exchanger_TM"/>
</dbReference>
<dbReference type="InterPro" id="IPR004771">
    <property type="entry name" value="K/H_exchanger"/>
</dbReference>
<dbReference type="InterPro" id="IPR020884">
    <property type="entry name" value="K_H_efflux_KefB"/>
</dbReference>
<dbReference type="InterPro" id="IPR038770">
    <property type="entry name" value="Na+/solute_symporter_sf"/>
</dbReference>
<dbReference type="InterPro" id="IPR036291">
    <property type="entry name" value="NAD(P)-bd_dom_sf"/>
</dbReference>
<dbReference type="InterPro" id="IPR003148">
    <property type="entry name" value="RCK_N"/>
</dbReference>
<dbReference type="NCBIfam" id="TIGR00932">
    <property type="entry name" value="2a37"/>
    <property type="match status" value="1"/>
</dbReference>
<dbReference type="NCBIfam" id="NF002973">
    <property type="entry name" value="PRK03659.1"/>
    <property type="match status" value="1"/>
</dbReference>
<dbReference type="PANTHER" id="PTHR46157">
    <property type="entry name" value="K(+) EFFLUX ANTIPORTER 3, CHLOROPLASTIC"/>
    <property type="match status" value="1"/>
</dbReference>
<dbReference type="PANTHER" id="PTHR46157:SF4">
    <property type="entry name" value="K(+) EFFLUX ANTIPORTER 3, CHLOROPLASTIC"/>
    <property type="match status" value="1"/>
</dbReference>
<dbReference type="Pfam" id="PF00999">
    <property type="entry name" value="Na_H_Exchanger"/>
    <property type="match status" value="1"/>
</dbReference>
<dbReference type="Pfam" id="PF02254">
    <property type="entry name" value="TrkA_N"/>
    <property type="match status" value="1"/>
</dbReference>
<dbReference type="SUPFAM" id="SSF51735">
    <property type="entry name" value="NAD(P)-binding Rossmann-fold domains"/>
    <property type="match status" value="1"/>
</dbReference>
<dbReference type="PROSITE" id="PS51201">
    <property type="entry name" value="RCK_N"/>
    <property type="match status" value="1"/>
</dbReference>
<reference key="1">
    <citation type="journal article" date="2005" name="Nucleic Acids Res.">
        <title>Genome dynamics and diversity of Shigella species, the etiologic agents of bacillary dysentery.</title>
        <authorList>
            <person name="Yang F."/>
            <person name="Yang J."/>
            <person name="Zhang X."/>
            <person name="Chen L."/>
            <person name="Jiang Y."/>
            <person name="Yan Y."/>
            <person name="Tang X."/>
            <person name="Wang J."/>
            <person name="Xiong Z."/>
            <person name="Dong J."/>
            <person name="Xue Y."/>
            <person name="Zhu Y."/>
            <person name="Xu X."/>
            <person name="Sun L."/>
            <person name="Chen S."/>
            <person name="Nie H."/>
            <person name="Peng J."/>
            <person name="Xu J."/>
            <person name="Wang Y."/>
            <person name="Yuan Z."/>
            <person name="Wen Y."/>
            <person name="Yao Z."/>
            <person name="Shen Y."/>
            <person name="Qiang B."/>
            <person name="Hou Y."/>
            <person name="Yu J."/>
            <person name="Jin Q."/>
        </authorList>
    </citation>
    <scope>NUCLEOTIDE SEQUENCE [LARGE SCALE GENOMIC DNA]</scope>
    <source>
        <strain>Sb227</strain>
    </source>
</reference>